<feature type="chain" id="PRO_0000168812" description="Large ribosomal RNA subunit accumulation protein YceD">
    <location>
        <begin position="1"/>
        <end position="173"/>
    </location>
</feature>
<reference key="1">
    <citation type="journal article" date="2001" name="Nature">
        <title>Genome sequence of enterohaemorrhagic Escherichia coli O157:H7.</title>
        <authorList>
            <person name="Perna N.T."/>
            <person name="Plunkett G. III"/>
            <person name="Burland V."/>
            <person name="Mau B."/>
            <person name="Glasner J.D."/>
            <person name="Rose D.J."/>
            <person name="Mayhew G.F."/>
            <person name="Evans P.S."/>
            <person name="Gregor J."/>
            <person name="Kirkpatrick H.A."/>
            <person name="Posfai G."/>
            <person name="Hackett J."/>
            <person name="Klink S."/>
            <person name="Boutin A."/>
            <person name="Shao Y."/>
            <person name="Miller L."/>
            <person name="Grotbeck E.J."/>
            <person name="Davis N.W."/>
            <person name="Lim A."/>
            <person name="Dimalanta E.T."/>
            <person name="Potamousis K."/>
            <person name="Apodaca J."/>
            <person name="Anantharaman T.S."/>
            <person name="Lin J."/>
            <person name="Yen G."/>
            <person name="Schwartz D.C."/>
            <person name="Welch R.A."/>
            <person name="Blattner F.R."/>
        </authorList>
    </citation>
    <scope>NUCLEOTIDE SEQUENCE [LARGE SCALE GENOMIC DNA]</scope>
    <source>
        <strain>O157:H7 / EDL933 / ATCC 700927 / EHEC</strain>
    </source>
</reference>
<reference key="2">
    <citation type="journal article" date="2001" name="DNA Res.">
        <title>Complete genome sequence of enterohemorrhagic Escherichia coli O157:H7 and genomic comparison with a laboratory strain K-12.</title>
        <authorList>
            <person name="Hayashi T."/>
            <person name="Makino K."/>
            <person name="Ohnishi M."/>
            <person name="Kurokawa K."/>
            <person name="Ishii K."/>
            <person name="Yokoyama K."/>
            <person name="Han C.-G."/>
            <person name="Ohtsubo E."/>
            <person name="Nakayama K."/>
            <person name="Murata T."/>
            <person name="Tanaka M."/>
            <person name="Tobe T."/>
            <person name="Iida T."/>
            <person name="Takami H."/>
            <person name="Honda T."/>
            <person name="Sasakawa C."/>
            <person name="Ogasawara N."/>
            <person name="Yasunaga T."/>
            <person name="Kuhara S."/>
            <person name="Shiba T."/>
            <person name="Hattori M."/>
            <person name="Shinagawa H."/>
        </authorList>
    </citation>
    <scope>NUCLEOTIDE SEQUENCE [LARGE SCALE GENOMIC DNA]</scope>
    <source>
        <strain>O157:H7 / Sakai / RIMD 0509952 / EHEC</strain>
    </source>
</reference>
<evidence type="ECO:0000250" key="1">
    <source>
        <dbReference type="UniProtKB" id="P0AB28"/>
    </source>
</evidence>
<evidence type="ECO:0000305" key="2"/>
<organism>
    <name type="scientific">Escherichia coli O157:H7</name>
    <dbReference type="NCBI Taxonomy" id="83334"/>
    <lineage>
        <taxon>Bacteria</taxon>
        <taxon>Pseudomonadati</taxon>
        <taxon>Pseudomonadota</taxon>
        <taxon>Gammaproteobacteria</taxon>
        <taxon>Enterobacterales</taxon>
        <taxon>Enterobacteriaceae</taxon>
        <taxon>Escherichia</taxon>
    </lineage>
</organism>
<comment type="function">
    <text evidence="1">Plays a role in synthesis, processing and/or stability of 23S rRNA.</text>
</comment>
<comment type="similarity">
    <text evidence="2">Belongs to the DUF177 domain family.</text>
</comment>
<accession>P0AB30</accession>
<accession>P14189</accession>
<proteinExistence type="inferred from homology"/>
<protein>
    <recommendedName>
        <fullName>Large ribosomal RNA subunit accumulation protein YceD</fullName>
    </recommendedName>
    <alternativeName>
        <fullName>23S rRNA accumulation protein YceD</fullName>
    </alternativeName>
</protein>
<gene>
    <name type="primary">yceD</name>
    <name type="ordered locus">Z1727</name>
    <name type="ordered locus">ECs1466</name>
</gene>
<dbReference type="EMBL" id="AE005174">
    <property type="protein sequence ID" value="AAG55834.1"/>
    <property type="molecule type" value="Genomic_DNA"/>
</dbReference>
<dbReference type="EMBL" id="BA000007">
    <property type="protein sequence ID" value="BAB34889.1"/>
    <property type="molecule type" value="Genomic_DNA"/>
</dbReference>
<dbReference type="PIR" id="B90812">
    <property type="entry name" value="B90812"/>
</dbReference>
<dbReference type="PIR" id="F85671">
    <property type="entry name" value="F85671"/>
</dbReference>
<dbReference type="RefSeq" id="NP_309493.1">
    <property type="nucleotide sequence ID" value="NC_002695.1"/>
</dbReference>
<dbReference type="RefSeq" id="WP_001174481.1">
    <property type="nucleotide sequence ID" value="NZ_VOAI01000018.1"/>
</dbReference>
<dbReference type="STRING" id="155864.Z1727"/>
<dbReference type="DNASU" id="959432"/>
<dbReference type="GeneID" id="86863582"/>
<dbReference type="GeneID" id="912718"/>
<dbReference type="KEGG" id="ece:Z1727"/>
<dbReference type="KEGG" id="ecs:ECs_1466"/>
<dbReference type="PATRIC" id="fig|386585.9.peg.1566"/>
<dbReference type="eggNOG" id="COG1399">
    <property type="taxonomic scope" value="Bacteria"/>
</dbReference>
<dbReference type="HOGENOM" id="CLU_094127_2_1_6"/>
<dbReference type="OMA" id="HITYCFS"/>
<dbReference type="Proteomes" id="UP000000558">
    <property type="component" value="Chromosome"/>
</dbReference>
<dbReference type="Proteomes" id="UP000002519">
    <property type="component" value="Chromosome"/>
</dbReference>
<dbReference type="GO" id="GO:0005829">
    <property type="term" value="C:cytosol"/>
    <property type="evidence" value="ECO:0007669"/>
    <property type="project" value="TreeGrafter"/>
</dbReference>
<dbReference type="GO" id="GO:0042254">
    <property type="term" value="P:ribosome biogenesis"/>
    <property type="evidence" value="ECO:0007669"/>
    <property type="project" value="UniProtKB-KW"/>
</dbReference>
<dbReference type="InterPro" id="IPR003772">
    <property type="entry name" value="YceD"/>
</dbReference>
<dbReference type="InterPro" id="IPR039255">
    <property type="entry name" value="YceD_bac"/>
</dbReference>
<dbReference type="NCBIfam" id="NF008395">
    <property type="entry name" value="PRK11193.1"/>
    <property type="match status" value="1"/>
</dbReference>
<dbReference type="PANTHER" id="PTHR38099">
    <property type="entry name" value="LARGE RIBOSOMAL RNA SUBUNIT ACCUMULATION PROTEIN YCED"/>
    <property type="match status" value="1"/>
</dbReference>
<dbReference type="PANTHER" id="PTHR38099:SF1">
    <property type="entry name" value="LARGE RIBOSOMAL RNA SUBUNIT ACCUMULATION PROTEIN YCED"/>
    <property type="match status" value="1"/>
</dbReference>
<dbReference type="Pfam" id="PF02620">
    <property type="entry name" value="YceD"/>
    <property type="match status" value="1"/>
</dbReference>
<sequence>MQKVKLPLTLDPVRTAQKRLDYQGIYTPDQVERVAESVVSVDSDVECSMSFAIDNQRLAVLNGDAKVTVTLECQRCGKPFTHQVYTTYCFSPVRSDEQAEALPEAYEPIEVNEFGEIDLLAMVEDEIILALPVVPVHDSEHCEVSEADMVFGELPEEAQKPNPFAVLASLKRK</sequence>
<name>YCED_ECO57</name>
<keyword id="KW-1185">Reference proteome</keyword>
<keyword id="KW-0690">Ribosome biogenesis</keyword>